<feature type="chain" id="PRO_0000398076" description="Arginine biosynthesis bifunctional protein ArgJ alpha chain" evidence="1">
    <location>
        <begin position="1"/>
        <end position="240"/>
    </location>
</feature>
<feature type="chain" id="PRO_0000398077" description="Arginine biosynthesis bifunctional protein ArgJ beta chain" evidence="1">
    <location>
        <begin position="241"/>
        <end position="473"/>
    </location>
</feature>
<feature type="active site" description="Nucleophile" evidence="1">
    <location>
        <position position="241"/>
    </location>
</feature>
<feature type="binding site" evidence="1">
    <location>
        <position position="201"/>
    </location>
    <ligand>
        <name>substrate</name>
    </ligand>
</feature>
<feature type="binding site" evidence="1">
    <location>
        <position position="230"/>
    </location>
    <ligand>
        <name>substrate</name>
    </ligand>
</feature>
<feature type="binding site" evidence="1">
    <location>
        <position position="241"/>
    </location>
    <ligand>
        <name>substrate</name>
    </ligand>
</feature>
<feature type="binding site" evidence="1">
    <location>
        <position position="328"/>
    </location>
    <ligand>
        <name>substrate</name>
    </ligand>
</feature>
<feature type="binding site" evidence="1">
    <location>
        <position position="468"/>
    </location>
    <ligand>
        <name>substrate</name>
    </ligand>
</feature>
<feature type="binding site" evidence="1">
    <location>
        <position position="473"/>
    </location>
    <ligand>
        <name>substrate</name>
    </ligand>
</feature>
<feature type="site" description="Involved in the stabilization of negative charge on the oxyanion by the formation of the oxyanion hole" evidence="1">
    <location>
        <position position="162"/>
    </location>
</feature>
<feature type="site" description="Involved in the stabilization of negative charge on the oxyanion by the formation of the oxyanion hole" evidence="1">
    <location>
        <position position="163"/>
    </location>
</feature>
<feature type="site" description="Cleavage; by autolysis" evidence="1">
    <location>
        <begin position="240"/>
        <end position="241"/>
    </location>
</feature>
<evidence type="ECO:0000255" key="1">
    <source>
        <dbReference type="HAMAP-Rule" id="MF_03124"/>
    </source>
</evidence>
<keyword id="KW-0012">Acyltransferase</keyword>
<keyword id="KW-0028">Amino-acid biosynthesis</keyword>
<keyword id="KW-0055">Arginine biosynthesis</keyword>
<keyword id="KW-0068">Autocatalytic cleavage</keyword>
<keyword id="KW-0496">Mitochondrion</keyword>
<keyword id="KW-0511">Multifunctional enzyme</keyword>
<keyword id="KW-0808">Transferase</keyword>
<dbReference type="EC" id="2.3.1.35" evidence="1"/>
<dbReference type="EC" id="2.3.1.1" evidence="1"/>
<dbReference type="EMBL" id="KN305539">
    <property type="protein sequence ID" value="EEH23302.2"/>
    <property type="molecule type" value="Genomic_DNA"/>
</dbReference>
<dbReference type="SMR" id="C0SCV8"/>
<dbReference type="MEROPS" id="T05.001"/>
<dbReference type="VEuPathDB" id="FungiDB:PABG_05513"/>
<dbReference type="HOGENOM" id="CLU_027172_1_0_1"/>
<dbReference type="OrthoDB" id="30457at33183"/>
<dbReference type="UniPathway" id="UPA00068">
    <property type="reaction ID" value="UER00106"/>
</dbReference>
<dbReference type="UniPathway" id="UPA00068">
    <property type="reaction ID" value="UER00111"/>
</dbReference>
<dbReference type="GO" id="GO:0005759">
    <property type="term" value="C:mitochondrial matrix"/>
    <property type="evidence" value="ECO:0007669"/>
    <property type="project" value="UniProtKB-SubCell"/>
</dbReference>
<dbReference type="GO" id="GO:0004358">
    <property type="term" value="F:glutamate N-acetyltransferase activity"/>
    <property type="evidence" value="ECO:0007669"/>
    <property type="project" value="UniProtKB-UniRule"/>
</dbReference>
<dbReference type="GO" id="GO:0004042">
    <property type="term" value="F:L-glutamate N-acetyltransferase activity"/>
    <property type="evidence" value="ECO:0007669"/>
    <property type="project" value="UniProtKB-UniRule"/>
</dbReference>
<dbReference type="GO" id="GO:0006526">
    <property type="term" value="P:L-arginine biosynthetic process"/>
    <property type="evidence" value="ECO:0007669"/>
    <property type="project" value="UniProtKB-UniRule"/>
</dbReference>
<dbReference type="GO" id="GO:0006592">
    <property type="term" value="P:ornithine biosynthetic process"/>
    <property type="evidence" value="ECO:0007669"/>
    <property type="project" value="TreeGrafter"/>
</dbReference>
<dbReference type="CDD" id="cd02152">
    <property type="entry name" value="OAT"/>
    <property type="match status" value="1"/>
</dbReference>
<dbReference type="FunFam" id="3.60.70.12:FF:000001">
    <property type="entry name" value="Arginine biosynthesis bifunctional protein ArgJ, chloroplastic"/>
    <property type="match status" value="1"/>
</dbReference>
<dbReference type="FunFam" id="3.10.20.340:FF:000002">
    <property type="entry name" value="Arginine biosynthesis bifunctional protein ArgJ, mitochondrial"/>
    <property type="match status" value="1"/>
</dbReference>
<dbReference type="FunFam" id="3.30.2330.10:FF:000001">
    <property type="entry name" value="Arginine biosynthesis bifunctional protein ArgJ, mitochondrial"/>
    <property type="match status" value="1"/>
</dbReference>
<dbReference type="Gene3D" id="3.30.2330.10">
    <property type="entry name" value="arginine biosynthesis bifunctional protein suprefamily"/>
    <property type="match status" value="1"/>
</dbReference>
<dbReference type="Gene3D" id="3.10.20.340">
    <property type="entry name" value="ArgJ beta chain, C-terminal domain"/>
    <property type="match status" value="1"/>
</dbReference>
<dbReference type="Gene3D" id="3.60.70.12">
    <property type="entry name" value="L-amino peptidase D-ALA esterase/amidase"/>
    <property type="match status" value="1"/>
</dbReference>
<dbReference type="HAMAP" id="MF_01106">
    <property type="entry name" value="ArgJ"/>
    <property type="match status" value="1"/>
</dbReference>
<dbReference type="InterPro" id="IPR002813">
    <property type="entry name" value="Arg_biosynth_ArgJ"/>
</dbReference>
<dbReference type="InterPro" id="IPR016117">
    <property type="entry name" value="ArgJ-like_dom_sf"/>
</dbReference>
<dbReference type="InterPro" id="IPR042195">
    <property type="entry name" value="ArgJ_beta_C"/>
</dbReference>
<dbReference type="NCBIfam" id="TIGR00120">
    <property type="entry name" value="ArgJ"/>
    <property type="match status" value="1"/>
</dbReference>
<dbReference type="NCBIfam" id="NF003802">
    <property type="entry name" value="PRK05388.1"/>
    <property type="match status" value="1"/>
</dbReference>
<dbReference type="PANTHER" id="PTHR23100">
    <property type="entry name" value="ARGININE BIOSYNTHESIS BIFUNCTIONAL PROTEIN ARGJ"/>
    <property type="match status" value="1"/>
</dbReference>
<dbReference type="PANTHER" id="PTHR23100:SF0">
    <property type="entry name" value="ARGININE BIOSYNTHESIS BIFUNCTIONAL PROTEIN ARGJ, MITOCHONDRIAL"/>
    <property type="match status" value="1"/>
</dbReference>
<dbReference type="Pfam" id="PF01960">
    <property type="entry name" value="ArgJ"/>
    <property type="match status" value="1"/>
</dbReference>
<dbReference type="SUPFAM" id="SSF56266">
    <property type="entry name" value="DmpA/ArgJ-like"/>
    <property type="match status" value="1"/>
</dbReference>
<sequence length="473" mass="49861">MKAHQSLHVVAGFVRFPMSKTGQSRCYSILKDISIPASKQKFVPSSGTYPKGFLAAGAHAGVKESNTQFPDVALICSETPCSAAAVFTTNKFQAAPVQVSKQVLEAREGADITGVVINSGCANAVTGKGGLEDAKSMSAKVDECNGTPSTSSKRPSTLVMSTGVIGQRLPIEKILNTIPVAHSSLSSTHKAWLTAARAICTTDTFPKLLSRTFTLPSSPNHTYRIAGMTKGAGMIHPNMATLLGILCTDVPISPAALKLLLSHAVSRSFNCISIDGDTSTNDTVALLANGAAGGQTITTPSSPNYAAMQTVLTSFAQSLAQLVVRDGEGATKFVTVRVLNSPSQADARAIASTIARSPLVKTALYGKDANWGRILCAIGYTQGIQAGTVVPERTSVSFKPVDGSEELKLLVNGEPEIVDEERAARILQDEDLEIVVDLGGGERGEEGMGGEEGIYWFCDFSHEYVTINGDYRT</sequence>
<protein>
    <recommendedName>
        <fullName evidence="1">Arginine biosynthesis bifunctional protein ArgJ, mitochondrial</fullName>
    </recommendedName>
    <domain>
        <recommendedName>
            <fullName evidence="1">Glutamate N-acetyltransferase</fullName>
            <shortName evidence="1">GAT</shortName>
            <ecNumber evidence="1">2.3.1.35</ecNumber>
        </recommendedName>
        <alternativeName>
            <fullName evidence="1">Ornithine acetyltransferase</fullName>
            <shortName evidence="1">OATase</shortName>
        </alternativeName>
        <alternativeName>
            <fullName evidence="1">Ornithine transacetylase</fullName>
        </alternativeName>
    </domain>
    <domain>
        <recommendedName>
            <fullName evidence="1">Amino-acid acetyltransferase</fullName>
            <ecNumber evidence="1">2.3.1.1</ecNumber>
        </recommendedName>
        <alternativeName>
            <fullName evidence="1">N-acetylglutamate synthase</fullName>
            <shortName evidence="1">AGS</shortName>
        </alternativeName>
    </domain>
    <component>
        <recommendedName>
            <fullName evidence="1">Arginine biosynthesis bifunctional protein ArgJ alpha chain</fullName>
        </recommendedName>
    </component>
    <component>
        <recommendedName>
            <fullName evidence="1">Arginine biosynthesis bifunctional protein ArgJ beta chain</fullName>
        </recommendedName>
    </component>
</protein>
<proteinExistence type="inferred from homology"/>
<reference key="1">
    <citation type="journal article" date="2011" name="PLoS Genet.">
        <title>Comparative genomic analysis of human fungal pathogens causing paracoccidioidomycosis.</title>
        <authorList>
            <person name="Desjardins C.A."/>
            <person name="Champion M.D."/>
            <person name="Holder J.W."/>
            <person name="Muszewska A."/>
            <person name="Goldberg J."/>
            <person name="Bailao A.M."/>
            <person name="Brigido M.M."/>
            <person name="Ferreira M.E."/>
            <person name="Garcia A.M."/>
            <person name="Grynberg M."/>
            <person name="Gujja S."/>
            <person name="Heiman D.I."/>
            <person name="Henn M.R."/>
            <person name="Kodira C.D."/>
            <person name="Leon-Narvaez H."/>
            <person name="Longo L.V.G."/>
            <person name="Ma L.-J."/>
            <person name="Malavazi I."/>
            <person name="Matsuo A.L."/>
            <person name="Morais F.V."/>
            <person name="Pereira M."/>
            <person name="Rodriguez-Brito S."/>
            <person name="Sakthikumar S."/>
            <person name="Salem-Izacc S.M."/>
            <person name="Sykes S.M."/>
            <person name="Teixeira M.M."/>
            <person name="Vallejo M.C."/>
            <person name="Walter M.E."/>
            <person name="Yandava C."/>
            <person name="Young S."/>
            <person name="Zeng Q."/>
            <person name="Zucker J."/>
            <person name="Felipe M.S."/>
            <person name="Goldman G.H."/>
            <person name="Haas B.J."/>
            <person name="McEwen J.G."/>
            <person name="Nino-Vega G."/>
            <person name="Puccia R."/>
            <person name="San-Blas G."/>
            <person name="Soares C.M."/>
            <person name="Birren B.W."/>
            <person name="Cuomo C.A."/>
        </authorList>
    </citation>
    <scope>NUCLEOTIDE SEQUENCE [LARGE SCALE GENOMIC DNA]</scope>
    <source>
        <strain>Pb03</strain>
    </source>
</reference>
<organism>
    <name type="scientific">Paracoccidioides brasiliensis (strain Pb03)</name>
    <dbReference type="NCBI Taxonomy" id="482561"/>
    <lineage>
        <taxon>Eukaryota</taxon>
        <taxon>Fungi</taxon>
        <taxon>Dikarya</taxon>
        <taxon>Ascomycota</taxon>
        <taxon>Pezizomycotina</taxon>
        <taxon>Eurotiomycetes</taxon>
        <taxon>Eurotiomycetidae</taxon>
        <taxon>Onygenales</taxon>
        <taxon>Ajellomycetaceae</taxon>
        <taxon>Paracoccidioides</taxon>
    </lineage>
</organism>
<gene>
    <name type="ORF">PABG_05513</name>
</gene>
<accession>C0SCV8</accession>
<comment type="function">
    <text evidence="1">Catalyzes two activities which are involved in the cyclic version of arginine biosynthesis: the synthesis of acetylglutamate from glutamate and acetyl-CoA, and of ornithine by transacetylation between acetylornithine and glutamate.</text>
</comment>
<comment type="catalytic activity">
    <reaction evidence="1">
        <text>N(2)-acetyl-L-ornithine + L-glutamate = N-acetyl-L-glutamate + L-ornithine</text>
        <dbReference type="Rhea" id="RHEA:15349"/>
        <dbReference type="ChEBI" id="CHEBI:29985"/>
        <dbReference type="ChEBI" id="CHEBI:44337"/>
        <dbReference type="ChEBI" id="CHEBI:46911"/>
        <dbReference type="ChEBI" id="CHEBI:57805"/>
        <dbReference type="EC" id="2.3.1.35"/>
    </reaction>
</comment>
<comment type="catalytic activity">
    <reaction evidence="1">
        <text>L-glutamate + acetyl-CoA = N-acetyl-L-glutamate + CoA + H(+)</text>
        <dbReference type="Rhea" id="RHEA:24292"/>
        <dbReference type="ChEBI" id="CHEBI:15378"/>
        <dbReference type="ChEBI" id="CHEBI:29985"/>
        <dbReference type="ChEBI" id="CHEBI:44337"/>
        <dbReference type="ChEBI" id="CHEBI:57287"/>
        <dbReference type="ChEBI" id="CHEBI:57288"/>
        <dbReference type="EC" id="2.3.1.1"/>
    </reaction>
</comment>
<comment type="pathway">
    <text evidence="1">Amino-acid biosynthesis; L-arginine biosynthesis; L-ornithine and N-acetyl-L-glutamate from L-glutamate and N(2)-acetyl-L-ornithine (cyclic): step 1/1.</text>
</comment>
<comment type="pathway">
    <text evidence="1">Amino-acid biosynthesis; L-arginine biosynthesis; N(2)-acetyl-L-ornithine from L-glutamate: step 1/4.</text>
</comment>
<comment type="subunit">
    <text evidence="1">Heterodimer of an alpha and a beta chain.</text>
</comment>
<comment type="subcellular location">
    <subcellularLocation>
        <location evidence="1">Mitochondrion matrix</location>
    </subcellularLocation>
</comment>
<comment type="PTM">
    <text evidence="1">The alpha and beta chains are autoproteolytically processed from a single precursor protein within the mitochondrion.</text>
</comment>
<comment type="miscellaneous">
    <text evidence="1">This protein may be expected to contain an N-terminal transit peptide but none has been predicted.</text>
</comment>
<comment type="similarity">
    <text evidence="1">Belongs to the ArgJ family.</text>
</comment>
<name>ARGJ_PARBP</name>